<name>PAND_ESCF3</name>
<dbReference type="EC" id="4.1.1.11" evidence="1"/>
<dbReference type="EMBL" id="CU928158">
    <property type="protein sequence ID" value="CAQ87735.1"/>
    <property type="molecule type" value="Genomic_DNA"/>
</dbReference>
<dbReference type="RefSeq" id="WP_000621515.1">
    <property type="nucleotide sequence ID" value="NC_011740.1"/>
</dbReference>
<dbReference type="SMR" id="B7LW38"/>
<dbReference type="GeneID" id="93777305"/>
<dbReference type="KEGG" id="efe:EFER_0152"/>
<dbReference type="HOGENOM" id="CLU_115305_2_1_6"/>
<dbReference type="OrthoDB" id="9803983at2"/>
<dbReference type="UniPathway" id="UPA00028">
    <property type="reaction ID" value="UER00002"/>
</dbReference>
<dbReference type="Proteomes" id="UP000000745">
    <property type="component" value="Chromosome"/>
</dbReference>
<dbReference type="GO" id="GO:0005829">
    <property type="term" value="C:cytosol"/>
    <property type="evidence" value="ECO:0007669"/>
    <property type="project" value="TreeGrafter"/>
</dbReference>
<dbReference type="GO" id="GO:0004068">
    <property type="term" value="F:aspartate 1-decarboxylase activity"/>
    <property type="evidence" value="ECO:0007669"/>
    <property type="project" value="UniProtKB-UniRule"/>
</dbReference>
<dbReference type="GO" id="GO:0006523">
    <property type="term" value="P:alanine biosynthetic process"/>
    <property type="evidence" value="ECO:0007669"/>
    <property type="project" value="InterPro"/>
</dbReference>
<dbReference type="GO" id="GO:0015940">
    <property type="term" value="P:pantothenate biosynthetic process"/>
    <property type="evidence" value="ECO:0007669"/>
    <property type="project" value="UniProtKB-UniRule"/>
</dbReference>
<dbReference type="CDD" id="cd06919">
    <property type="entry name" value="Asp_decarbox"/>
    <property type="match status" value="1"/>
</dbReference>
<dbReference type="FunFam" id="2.40.40.20:FF:000004">
    <property type="entry name" value="Aspartate 1-decarboxylase"/>
    <property type="match status" value="1"/>
</dbReference>
<dbReference type="Gene3D" id="2.40.40.20">
    <property type="match status" value="1"/>
</dbReference>
<dbReference type="HAMAP" id="MF_00446">
    <property type="entry name" value="PanD"/>
    <property type="match status" value="1"/>
</dbReference>
<dbReference type="InterPro" id="IPR009010">
    <property type="entry name" value="Asp_de-COase-like_dom_sf"/>
</dbReference>
<dbReference type="InterPro" id="IPR003190">
    <property type="entry name" value="Asp_decarbox"/>
</dbReference>
<dbReference type="NCBIfam" id="TIGR00223">
    <property type="entry name" value="panD"/>
    <property type="match status" value="1"/>
</dbReference>
<dbReference type="PANTHER" id="PTHR21012">
    <property type="entry name" value="ASPARTATE 1-DECARBOXYLASE"/>
    <property type="match status" value="1"/>
</dbReference>
<dbReference type="PANTHER" id="PTHR21012:SF0">
    <property type="entry name" value="ASPARTATE 1-DECARBOXYLASE"/>
    <property type="match status" value="1"/>
</dbReference>
<dbReference type="Pfam" id="PF02261">
    <property type="entry name" value="Asp_decarbox"/>
    <property type="match status" value="1"/>
</dbReference>
<dbReference type="PIRSF" id="PIRSF006246">
    <property type="entry name" value="Asp_decarbox"/>
    <property type="match status" value="1"/>
</dbReference>
<dbReference type="SUPFAM" id="SSF50692">
    <property type="entry name" value="ADC-like"/>
    <property type="match status" value="1"/>
</dbReference>
<sequence>MIRTMLQGKLHRVKVTHADLHYEGSCAIDQDFLDAAGILENEAIDIWNVTNGKRFSTYAIAAERGSRIISVNGAAAHCASVGDIVIIASFVTMPDEEARTWRPNVAYFEGDNEMKRTAKAIPVQVA</sequence>
<organism>
    <name type="scientific">Escherichia fergusonii (strain ATCC 35469 / DSM 13698 / CCUG 18766 / IAM 14443 / JCM 21226 / LMG 7866 / NBRC 102419 / NCTC 12128 / CDC 0568-73)</name>
    <dbReference type="NCBI Taxonomy" id="585054"/>
    <lineage>
        <taxon>Bacteria</taxon>
        <taxon>Pseudomonadati</taxon>
        <taxon>Pseudomonadota</taxon>
        <taxon>Gammaproteobacteria</taxon>
        <taxon>Enterobacterales</taxon>
        <taxon>Enterobacteriaceae</taxon>
        <taxon>Escherichia</taxon>
    </lineage>
</organism>
<proteinExistence type="inferred from homology"/>
<reference key="1">
    <citation type="journal article" date="2009" name="PLoS Genet.">
        <title>Organised genome dynamics in the Escherichia coli species results in highly diverse adaptive paths.</title>
        <authorList>
            <person name="Touchon M."/>
            <person name="Hoede C."/>
            <person name="Tenaillon O."/>
            <person name="Barbe V."/>
            <person name="Baeriswyl S."/>
            <person name="Bidet P."/>
            <person name="Bingen E."/>
            <person name="Bonacorsi S."/>
            <person name="Bouchier C."/>
            <person name="Bouvet O."/>
            <person name="Calteau A."/>
            <person name="Chiapello H."/>
            <person name="Clermont O."/>
            <person name="Cruveiller S."/>
            <person name="Danchin A."/>
            <person name="Diard M."/>
            <person name="Dossat C."/>
            <person name="Karoui M.E."/>
            <person name="Frapy E."/>
            <person name="Garry L."/>
            <person name="Ghigo J.M."/>
            <person name="Gilles A.M."/>
            <person name="Johnson J."/>
            <person name="Le Bouguenec C."/>
            <person name="Lescat M."/>
            <person name="Mangenot S."/>
            <person name="Martinez-Jehanne V."/>
            <person name="Matic I."/>
            <person name="Nassif X."/>
            <person name="Oztas S."/>
            <person name="Petit M.A."/>
            <person name="Pichon C."/>
            <person name="Rouy Z."/>
            <person name="Ruf C.S."/>
            <person name="Schneider D."/>
            <person name="Tourret J."/>
            <person name="Vacherie B."/>
            <person name="Vallenet D."/>
            <person name="Medigue C."/>
            <person name="Rocha E.P.C."/>
            <person name="Denamur E."/>
        </authorList>
    </citation>
    <scope>NUCLEOTIDE SEQUENCE [LARGE SCALE GENOMIC DNA]</scope>
    <source>
        <strain>ATCC 35469 / DSM 13698 / BCRC 15582 / CCUG 18766 / IAM 14443 / JCM 21226 / LMG 7866 / NBRC 102419 / NCTC 12128 / CDC 0568-73</strain>
    </source>
</reference>
<comment type="function">
    <text evidence="1">Catalyzes the pyruvoyl-dependent decarboxylation of aspartate to produce beta-alanine.</text>
</comment>
<comment type="catalytic activity">
    <reaction evidence="1">
        <text>L-aspartate + H(+) = beta-alanine + CO2</text>
        <dbReference type="Rhea" id="RHEA:19497"/>
        <dbReference type="ChEBI" id="CHEBI:15378"/>
        <dbReference type="ChEBI" id="CHEBI:16526"/>
        <dbReference type="ChEBI" id="CHEBI:29991"/>
        <dbReference type="ChEBI" id="CHEBI:57966"/>
        <dbReference type="EC" id="4.1.1.11"/>
    </reaction>
</comment>
<comment type="cofactor">
    <cofactor evidence="1">
        <name>pyruvate</name>
        <dbReference type="ChEBI" id="CHEBI:15361"/>
    </cofactor>
    <text evidence="1">Binds 1 pyruvoyl group covalently per subunit.</text>
</comment>
<comment type="pathway">
    <text evidence="1">Cofactor biosynthesis; (R)-pantothenate biosynthesis; beta-alanine from L-aspartate: step 1/1.</text>
</comment>
<comment type="subunit">
    <text evidence="1">Heterooctamer of four alpha and four beta subunits.</text>
</comment>
<comment type="subcellular location">
    <subcellularLocation>
        <location evidence="1">Cytoplasm</location>
    </subcellularLocation>
</comment>
<comment type="PTM">
    <text evidence="1">Is synthesized initially as an inactive proenzyme, which is activated by self-cleavage at a specific serine bond to produce a beta-subunit with a hydroxyl group at its C-terminus and an alpha-subunit with a pyruvoyl group at its N-terminus.</text>
</comment>
<comment type="similarity">
    <text evidence="1">Belongs to the PanD family.</text>
</comment>
<gene>
    <name evidence="1" type="primary">panD</name>
    <name type="ordered locus">EFER_0152</name>
</gene>
<feature type="chain" id="PRO_1000124819" description="Aspartate 1-decarboxylase beta chain" evidence="1">
    <location>
        <begin position="1"/>
        <end position="24"/>
    </location>
</feature>
<feature type="chain" id="PRO_1000124820" description="Aspartate 1-decarboxylase alpha chain" evidence="1">
    <location>
        <begin position="25"/>
        <end position="126"/>
    </location>
</feature>
<feature type="active site" description="Schiff-base intermediate with substrate; via pyruvic acid" evidence="1">
    <location>
        <position position="25"/>
    </location>
</feature>
<feature type="active site" description="Proton donor" evidence="1">
    <location>
        <position position="58"/>
    </location>
</feature>
<feature type="binding site" evidence="1">
    <location>
        <position position="57"/>
    </location>
    <ligand>
        <name>substrate</name>
    </ligand>
</feature>
<feature type="binding site" evidence="1">
    <location>
        <begin position="73"/>
        <end position="75"/>
    </location>
    <ligand>
        <name>substrate</name>
    </ligand>
</feature>
<feature type="modified residue" description="Pyruvic acid (Ser)" evidence="1">
    <location>
        <position position="25"/>
    </location>
</feature>
<evidence type="ECO:0000255" key="1">
    <source>
        <dbReference type="HAMAP-Rule" id="MF_00446"/>
    </source>
</evidence>
<keyword id="KW-0068">Autocatalytic cleavage</keyword>
<keyword id="KW-0963">Cytoplasm</keyword>
<keyword id="KW-0210">Decarboxylase</keyword>
<keyword id="KW-0456">Lyase</keyword>
<keyword id="KW-0566">Pantothenate biosynthesis</keyword>
<keyword id="KW-0670">Pyruvate</keyword>
<keyword id="KW-0704">Schiff base</keyword>
<keyword id="KW-0865">Zymogen</keyword>
<protein>
    <recommendedName>
        <fullName evidence="1">Aspartate 1-decarboxylase</fullName>
        <ecNumber evidence="1">4.1.1.11</ecNumber>
    </recommendedName>
    <alternativeName>
        <fullName evidence="1">Aspartate alpha-decarboxylase</fullName>
    </alternativeName>
    <component>
        <recommendedName>
            <fullName evidence="1">Aspartate 1-decarboxylase beta chain</fullName>
        </recommendedName>
    </component>
    <component>
        <recommendedName>
            <fullName evidence="1">Aspartate 1-decarboxylase alpha chain</fullName>
        </recommendedName>
    </component>
</protein>
<accession>B7LW38</accession>